<comment type="function">
    <text evidence="1">Involved in the TonB-dependent energy-dependent transport of various receptor-bound substrates. Protects ExbD from proteolytic degradation and functionally stabilizes TonB (By similarity).</text>
</comment>
<comment type="subunit">
    <text evidence="1">The accessory proteins ExbB and ExbD seem to form a complex with TonB.</text>
</comment>
<comment type="subcellular location">
    <subcellularLocation>
        <location>Cell inner membrane</location>
        <topology>Multi-pass membrane protein</topology>
    </subcellularLocation>
</comment>
<comment type="similarity">
    <text evidence="3">Belongs to the ExbB/TolQ family.</text>
</comment>
<sequence length="220" mass="24144">MNLKLVFESGDPVLIGVFVLMLLMSIVTWCLVVLRCIKLYRARKGNAAVKRHMRDTLSLNDAVEKVRAVDAPLSKLAQEALQSYRNYRRNEASELAQALPLNEYLVIQIRNSMAQIMRRFDYGMTALASIGATAPFIGLFGTVWGIYHALINIGQSGQMSIAAVAGPIGEALVATAAGLFVAIPAVLAYNFLNRGTKILTQDLDAMAHDLHVRLLNQKDS</sequence>
<protein>
    <recommendedName>
        <fullName>Biopolymer transport protein ExbB</fullName>
    </recommendedName>
</protein>
<gene>
    <name type="primary">exbB</name>
    <name type="ordered locus">NMB1729</name>
</gene>
<organism>
    <name type="scientific">Neisseria meningitidis serogroup B (strain ATCC BAA-335 / MC58)</name>
    <dbReference type="NCBI Taxonomy" id="122586"/>
    <lineage>
        <taxon>Bacteria</taxon>
        <taxon>Pseudomonadati</taxon>
        <taxon>Pseudomonadota</taxon>
        <taxon>Betaproteobacteria</taxon>
        <taxon>Neisseriales</taxon>
        <taxon>Neisseriaceae</taxon>
        <taxon>Neisseria</taxon>
    </lineage>
</organism>
<reference key="1">
    <citation type="journal article" date="2000" name="Science">
        <title>Complete genome sequence of Neisseria meningitidis serogroup B strain MC58.</title>
        <authorList>
            <person name="Tettelin H."/>
            <person name="Saunders N.J."/>
            <person name="Heidelberg J.F."/>
            <person name="Jeffries A.C."/>
            <person name="Nelson K.E."/>
            <person name="Eisen J.A."/>
            <person name="Ketchum K.A."/>
            <person name="Hood D.W."/>
            <person name="Peden J.F."/>
            <person name="Dodson R.J."/>
            <person name="Nelson W.C."/>
            <person name="Gwinn M.L."/>
            <person name="DeBoy R.T."/>
            <person name="Peterson J.D."/>
            <person name="Hickey E.K."/>
            <person name="Haft D.H."/>
            <person name="Salzberg S.L."/>
            <person name="White O."/>
            <person name="Fleischmann R.D."/>
            <person name="Dougherty B.A."/>
            <person name="Mason T.M."/>
            <person name="Ciecko A."/>
            <person name="Parksey D.S."/>
            <person name="Blair E."/>
            <person name="Cittone H."/>
            <person name="Clark E.B."/>
            <person name="Cotton M.D."/>
            <person name="Utterback T.R."/>
            <person name="Khouri H.M."/>
            <person name="Qin H."/>
            <person name="Vamathevan J.J."/>
            <person name="Gill J."/>
            <person name="Scarlato V."/>
            <person name="Masignani V."/>
            <person name="Pizza M."/>
            <person name="Grandi G."/>
            <person name="Sun L."/>
            <person name="Smith H.O."/>
            <person name="Fraser C.M."/>
            <person name="Moxon E.R."/>
            <person name="Rappuoli R."/>
            <person name="Venter J.C."/>
        </authorList>
    </citation>
    <scope>NUCLEOTIDE SEQUENCE [LARGE SCALE GENOMIC DNA]</scope>
    <source>
        <strain>ATCC BAA-335 / MC58</strain>
    </source>
</reference>
<accession>P64100</accession>
<accession>P57027</accession>
<keyword id="KW-0997">Cell inner membrane</keyword>
<keyword id="KW-1003">Cell membrane</keyword>
<keyword id="KW-0472">Membrane</keyword>
<keyword id="KW-0653">Protein transport</keyword>
<keyword id="KW-1185">Reference proteome</keyword>
<keyword id="KW-0812">Transmembrane</keyword>
<keyword id="KW-1133">Transmembrane helix</keyword>
<keyword id="KW-0813">Transport</keyword>
<evidence type="ECO:0000250" key="1"/>
<evidence type="ECO:0000255" key="2"/>
<evidence type="ECO:0000305" key="3"/>
<feature type="chain" id="PRO_0000145807" description="Biopolymer transport protein ExbB">
    <location>
        <begin position="1"/>
        <end position="220"/>
    </location>
</feature>
<feature type="transmembrane region" description="Helical" evidence="2">
    <location>
        <begin position="13"/>
        <end position="33"/>
    </location>
</feature>
<feature type="transmembrane region" description="Helical" evidence="2">
    <location>
        <begin position="126"/>
        <end position="146"/>
    </location>
</feature>
<feature type="transmembrane region" description="Helical" evidence="2">
    <location>
        <begin position="168"/>
        <end position="188"/>
    </location>
</feature>
<name>EXBB_NEIMB</name>
<proteinExistence type="inferred from homology"/>
<dbReference type="EMBL" id="AE002098">
    <property type="protein sequence ID" value="AAF42074.1"/>
    <property type="molecule type" value="Genomic_DNA"/>
</dbReference>
<dbReference type="PIR" id="H81048">
    <property type="entry name" value="H81048"/>
</dbReference>
<dbReference type="RefSeq" id="NP_274732.1">
    <property type="nucleotide sequence ID" value="NC_003112.2"/>
</dbReference>
<dbReference type="RefSeq" id="WP_002216612.1">
    <property type="nucleotide sequence ID" value="NC_003112.2"/>
</dbReference>
<dbReference type="SMR" id="P64100"/>
<dbReference type="FunCoup" id="P64100">
    <property type="interactions" value="74"/>
</dbReference>
<dbReference type="STRING" id="122586.NMB1729"/>
<dbReference type="PaxDb" id="122586-NMB1729"/>
<dbReference type="GeneID" id="93387596"/>
<dbReference type="KEGG" id="nme:NMB1729"/>
<dbReference type="PATRIC" id="fig|122586.8.peg.2216"/>
<dbReference type="HOGENOM" id="CLU_053325_2_0_4"/>
<dbReference type="InParanoid" id="P64100"/>
<dbReference type="OrthoDB" id="9805133at2"/>
<dbReference type="Proteomes" id="UP000000425">
    <property type="component" value="Chromosome"/>
</dbReference>
<dbReference type="GO" id="GO:0005886">
    <property type="term" value="C:plasma membrane"/>
    <property type="evidence" value="ECO:0000318"/>
    <property type="project" value="GO_Central"/>
</dbReference>
<dbReference type="GO" id="GO:0017038">
    <property type="term" value="P:protein import"/>
    <property type="evidence" value="ECO:0000318"/>
    <property type="project" value="GO_Central"/>
</dbReference>
<dbReference type="InterPro" id="IPR050790">
    <property type="entry name" value="ExbB/TolQ_transport"/>
</dbReference>
<dbReference type="InterPro" id="IPR002898">
    <property type="entry name" value="MotA_ExbB_proton_chnl"/>
</dbReference>
<dbReference type="PANTHER" id="PTHR30625:SF14">
    <property type="entry name" value="BIOPOLYMER TRANSPORT PROTEIN EXBB"/>
    <property type="match status" value="1"/>
</dbReference>
<dbReference type="PANTHER" id="PTHR30625">
    <property type="entry name" value="PROTEIN TOLQ"/>
    <property type="match status" value="1"/>
</dbReference>
<dbReference type="Pfam" id="PF01618">
    <property type="entry name" value="MotA_ExbB"/>
    <property type="match status" value="1"/>
</dbReference>